<name>BIOB_SHIF8</name>
<evidence type="ECO:0000255" key="1">
    <source>
        <dbReference type="HAMAP-Rule" id="MF_01694"/>
    </source>
</evidence>
<evidence type="ECO:0000255" key="2">
    <source>
        <dbReference type="PROSITE-ProRule" id="PRU01266"/>
    </source>
</evidence>
<dbReference type="EC" id="2.8.1.6" evidence="1"/>
<dbReference type="EMBL" id="CP000266">
    <property type="protein sequence ID" value="ABF02990.1"/>
    <property type="molecule type" value="Genomic_DNA"/>
</dbReference>
<dbReference type="RefSeq" id="WP_000951226.1">
    <property type="nucleotide sequence ID" value="NC_008258.1"/>
</dbReference>
<dbReference type="SMR" id="Q0T6I5"/>
<dbReference type="KEGG" id="sfv:SFV_0757"/>
<dbReference type="HOGENOM" id="CLU_033172_1_2_6"/>
<dbReference type="UniPathway" id="UPA00078">
    <property type="reaction ID" value="UER00162"/>
</dbReference>
<dbReference type="Proteomes" id="UP000000659">
    <property type="component" value="Chromosome"/>
</dbReference>
<dbReference type="GO" id="GO:0051537">
    <property type="term" value="F:2 iron, 2 sulfur cluster binding"/>
    <property type="evidence" value="ECO:0007669"/>
    <property type="project" value="UniProtKB-KW"/>
</dbReference>
<dbReference type="GO" id="GO:0051539">
    <property type="term" value="F:4 iron, 4 sulfur cluster binding"/>
    <property type="evidence" value="ECO:0007669"/>
    <property type="project" value="UniProtKB-KW"/>
</dbReference>
<dbReference type="GO" id="GO:0004076">
    <property type="term" value="F:biotin synthase activity"/>
    <property type="evidence" value="ECO:0007669"/>
    <property type="project" value="UniProtKB-UniRule"/>
</dbReference>
<dbReference type="GO" id="GO:0005506">
    <property type="term" value="F:iron ion binding"/>
    <property type="evidence" value="ECO:0007669"/>
    <property type="project" value="UniProtKB-UniRule"/>
</dbReference>
<dbReference type="GO" id="GO:0009102">
    <property type="term" value="P:biotin biosynthetic process"/>
    <property type="evidence" value="ECO:0007669"/>
    <property type="project" value="UniProtKB-UniRule"/>
</dbReference>
<dbReference type="CDD" id="cd01335">
    <property type="entry name" value="Radical_SAM"/>
    <property type="match status" value="1"/>
</dbReference>
<dbReference type="FunFam" id="3.20.20.70:FF:000011">
    <property type="entry name" value="Biotin synthase"/>
    <property type="match status" value="1"/>
</dbReference>
<dbReference type="Gene3D" id="3.20.20.70">
    <property type="entry name" value="Aldolase class I"/>
    <property type="match status" value="1"/>
</dbReference>
<dbReference type="HAMAP" id="MF_01694">
    <property type="entry name" value="BioB"/>
    <property type="match status" value="1"/>
</dbReference>
<dbReference type="InterPro" id="IPR013785">
    <property type="entry name" value="Aldolase_TIM"/>
</dbReference>
<dbReference type="InterPro" id="IPR010722">
    <property type="entry name" value="BATS_dom"/>
</dbReference>
<dbReference type="InterPro" id="IPR002684">
    <property type="entry name" value="Biotin_synth/BioAB"/>
</dbReference>
<dbReference type="InterPro" id="IPR024177">
    <property type="entry name" value="Biotin_synthase"/>
</dbReference>
<dbReference type="InterPro" id="IPR006638">
    <property type="entry name" value="Elp3/MiaA/NifB-like_rSAM"/>
</dbReference>
<dbReference type="InterPro" id="IPR007197">
    <property type="entry name" value="rSAM"/>
</dbReference>
<dbReference type="NCBIfam" id="TIGR00433">
    <property type="entry name" value="bioB"/>
    <property type="match status" value="1"/>
</dbReference>
<dbReference type="PANTHER" id="PTHR22976">
    <property type="entry name" value="BIOTIN SYNTHASE"/>
    <property type="match status" value="1"/>
</dbReference>
<dbReference type="PANTHER" id="PTHR22976:SF2">
    <property type="entry name" value="BIOTIN SYNTHASE, MITOCHONDRIAL"/>
    <property type="match status" value="1"/>
</dbReference>
<dbReference type="Pfam" id="PF06968">
    <property type="entry name" value="BATS"/>
    <property type="match status" value="1"/>
</dbReference>
<dbReference type="Pfam" id="PF04055">
    <property type="entry name" value="Radical_SAM"/>
    <property type="match status" value="1"/>
</dbReference>
<dbReference type="PIRSF" id="PIRSF001619">
    <property type="entry name" value="Biotin_synth"/>
    <property type="match status" value="1"/>
</dbReference>
<dbReference type="SFLD" id="SFLDF00272">
    <property type="entry name" value="biotin_synthase"/>
    <property type="match status" value="1"/>
</dbReference>
<dbReference type="SFLD" id="SFLDS00029">
    <property type="entry name" value="Radical_SAM"/>
    <property type="match status" value="1"/>
</dbReference>
<dbReference type="SMART" id="SM00876">
    <property type="entry name" value="BATS"/>
    <property type="match status" value="1"/>
</dbReference>
<dbReference type="SMART" id="SM00729">
    <property type="entry name" value="Elp3"/>
    <property type="match status" value="1"/>
</dbReference>
<dbReference type="SUPFAM" id="SSF102114">
    <property type="entry name" value="Radical SAM enzymes"/>
    <property type="match status" value="1"/>
</dbReference>
<dbReference type="PROSITE" id="PS51918">
    <property type="entry name" value="RADICAL_SAM"/>
    <property type="match status" value="1"/>
</dbReference>
<keyword id="KW-0001">2Fe-2S</keyword>
<keyword id="KW-0004">4Fe-4S</keyword>
<keyword id="KW-0093">Biotin biosynthesis</keyword>
<keyword id="KW-0408">Iron</keyword>
<keyword id="KW-0411">Iron-sulfur</keyword>
<keyword id="KW-0479">Metal-binding</keyword>
<keyword id="KW-0949">S-adenosyl-L-methionine</keyword>
<keyword id="KW-0808">Transferase</keyword>
<protein>
    <recommendedName>
        <fullName evidence="1">Biotin synthase</fullName>
        <ecNumber evidence="1">2.8.1.6</ecNumber>
    </recommendedName>
</protein>
<gene>
    <name evidence="1" type="primary">bioB</name>
    <name type="ordered locus">SFV_0757</name>
</gene>
<accession>Q0T6I5</accession>
<feature type="chain" id="PRO_0000381634" description="Biotin synthase">
    <location>
        <begin position="1"/>
        <end position="346"/>
    </location>
</feature>
<feature type="domain" description="Radical SAM core" evidence="2">
    <location>
        <begin position="38"/>
        <end position="256"/>
    </location>
</feature>
<feature type="binding site" evidence="1">
    <location>
        <position position="53"/>
    </location>
    <ligand>
        <name>[4Fe-4S] cluster</name>
        <dbReference type="ChEBI" id="CHEBI:49883"/>
        <note>4Fe-4S-S-AdoMet</note>
    </ligand>
</feature>
<feature type="binding site" evidence="1">
    <location>
        <position position="57"/>
    </location>
    <ligand>
        <name>[4Fe-4S] cluster</name>
        <dbReference type="ChEBI" id="CHEBI:49883"/>
        <note>4Fe-4S-S-AdoMet</note>
    </ligand>
</feature>
<feature type="binding site" evidence="1">
    <location>
        <position position="60"/>
    </location>
    <ligand>
        <name>[4Fe-4S] cluster</name>
        <dbReference type="ChEBI" id="CHEBI:49883"/>
        <note>4Fe-4S-S-AdoMet</note>
    </ligand>
</feature>
<feature type="binding site" evidence="1">
    <location>
        <position position="97"/>
    </location>
    <ligand>
        <name>[2Fe-2S] cluster</name>
        <dbReference type="ChEBI" id="CHEBI:190135"/>
    </ligand>
</feature>
<feature type="binding site" evidence="1">
    <location>
        <position position="128"/>
    </location>
    <ligand>
        <name>[2Fe-2S] cluster</name>
        <dbReference type="ChEBI" id="CHEBI:190135"/>
    </ligand>
</feature>
<feature type="binding site" evidence="1">
    <location>
        <position position="188"/>
    </location>
    <ligand>
        <name>[2Fe-2S] cluster</name>
        <dbReference type="ChEBI" id="CHEBI:190135"/>
    </ligand>
</feature>
<feature type="binding site" evidence="1">
    <location>
        <position position="260"/>
    </location>
    <ligand>
        <name>[2Fe-2S] cluster</name>
        <dbReference type="ChEBI" id="CHEBI:190135"/>
    </ligand>
</feature>
<comment type="function">
    <text evidence="1">Catalyzes the conversion of dethiobiotin (DTB) to biotin by the insertion of a sulfur atom into dethiobiotin via a radical-based mechanism.</text>
</comment>
<comment type="catalytic activity">
    <reaction evidence="1">
        <text>(4R,5S)-dethiobiotin + (sulfur carrier)-SH + 2 reduced [2Fe-2S]-[ferredoxin] + 2 S-adenosyl-L-methionine = (sulfur carrier)-H + biotin + 2 5'-deoxyadenosine + 2 L-methionine + 2 oxidized [2Fe-2S]-[ferredoxin]</text>
        <dbReference type="Rhea" id="RHEA:22060"/>
        <dbReference type="Rhea" id="RHEA-COMP:10000"/>
        <dbReference type="Rhea" id="RHEA-COMP:10001"/>
        <dbReference type="Rhea" id="RHEA-COMP:14737"/>
        <dbReference type="Rhea" id="RHEA-COMP:14739"/>
        <dbReference type="ChEBI" id="CHEBI:17319"/>
        <dbReference type="ChEBI" id="CHEBI:29917"/>
        <dbReference type="ChEBI" id="CHEBI:33737"/>
        <dbReference type="ChEBI" id="CHEBI:33738"/>
        <dbReference type="ChEBI" id="CHEBI:57586"/>
        <dbReference type="ChEBI" id="CHEBI:57844"/>
        <dbReference type="ChEBI" id="CHEBI:59789"/>
        <dbReference type="ChEBI" id="CHEBI:64428"/>
        <dbReference type="ChEBI" id="CHEBI:149473"/>
        <dbReference type="EC" id="2.8.1.6"/>
    </reaction>
</comment>
<comment type="cofactor">
    <cofactor evidence="1">
        <name>[4Fe-4S] cluster</name>
        <dbReference type="ChEBI" id="CHEBI:49883"/>
    </cofactor>
    <text evidence="1">Binds 1 [4Fe-4S] cluster. The cluster is coordinated with 3 cysteines and an exchangeable S-adenosyl-L-methionine.</text>
</comment>
<comment type="cofactor">
    <cofactor evidence="1">
        <name>[2Fe-2S] cluster</name>
        <dbReference type="ChEBI" id="CHEBI:190135"/>
    </cofactor>
    <text evidence="1">Binds 1 [2Fe-2S] cluster. The cluster is coordinated with 3 cysteines and 1 arginine.</text>
</comment>
<comment type="pathway">
    <text evidence="1">Cofactor biosynthesis; biotin biosynthesis; biotin from 7,8-diaminononanoate: step 2/2.</text>
</comment>
<comment type="subunit">
    <text evidence="1">Homodimer.</text>
</comment>
<comment type="similarity">
    <text evidence="1">Belongs to the radical SAM superfamily. Biotin synthase family.</text>
</comment>
<proteinExistence type="inferred from homology"/>
<organism>
    <name type="scientific">Shigella flexneri serotype 5b (strain 8401)</name>
    <dbReference type="NCBI Taxonomy" id="373384"/>
    <lineage>
        <taxon>Bacteria</taxon>
        <taxon>Pseudomonadati</taxon>
        <taxon>Pseudomonadota</taxon>
        <taxon>Gammaproteobacteria</taxon>
        <taxon>Enterobacterales</taxon>
        <taxon>Enterobacteriaceae</taxon>
        <taxon>Shigella</taxon>
    </lineage>
</organism>
<reference key="1">
    <citation type="journal article" date="2006" name="BMC Genomics">
        <title>Complete genome sequence of Shigella flexneri 5b and comparison with Shigella flexneri 2a.</title>
        <authorList>
            <person name="Nie H."/>
            <person name="Yang F."/>
            <person name="Zhang X."/>
            <person name="Yang J."/>
            <person name="Chen L."/>
            <person name="Wang J."/>
            <person name="Xiong Z."/>
            <person name="Peng J."/>
            <person name="Sun L."/>
            <person name="Dong J."/>
            <person name="Xue Y."/>
            <person name="Xu X."/>
            <person name="Chen S."/>
            <person name="Yao Z."/>
            <person name="Shen Y."/>
            <person name="Jin Q."/>
        </authorList>
    </citation>
    <scope>NUCLEOTIDE SEQUENCE [LARGE SCALE GENOMIC DNA]</scope>
    <source>
        <strain>8401</strain>
    </source>
</reference>
<sequence length="346" mass="38590">MAHRPRWTLSQVTELFEKPLLDLLFEAQQVHRQHFEPRQVQVSTLLSIKTGACPEDCKYCPQSSRYKTGLEAERLMEVEQVLESARKAKAAGSTRFCMGAAWKNPHERDMPYLEQMVQGVKAMGLEACMTLGTLSESQAQRLANAGLDYYNHNLDTSPEFYGNIITTRTYQERLDTLEKVRDAGIKVCSGGIVGLGETVKDRAGLLLQLANLPTPPESVPINMLVKVKGTPLADNDDVDAFDFIRTIAVARIMMPTSYVRLSAGREQMNEQTQAMCFMAGANSIFYGCKLLTTPNPEEDKDLQLFRKLGLNPQQTAVLAGDNEQQQRLGQALMTPDTDEYYNAAAL</sequence>